<organism>
    <name type="scientific">Shigella boydii serotype 4 (strain Sb227)</name>
    <dbReference type="NCBI Taxonomy" id="300268"/>
    <lineage>
        <taxon>Bacteria</taxon>
        <taxon>Pseudomonadati</taxon>
        <taxon>Pseudomonadota</taxon>
        <taxon>Gammaproteobacteria</taxon>
        <taxon>Enterobacterales</taxon>
        <taxon>Enterobacteriaceae</taxon>
        <taxon>Shigella</taxon>
    </lineage>
</organism>
<gene>
    <name evidence="1" type="primary">wecG</name>
    <name evidence="1" type="synonym">rffM</name>
    <name type="ordered locus">SBO_3806</name>
</gene>
<feature type="chain" id="PRO_1000062731" description="UDP-N-acetyl-D-mannosaminuronic acid transferase">
    <location>
        <begin position="1"/>
        <end position="246"/>
    </location>
</feature>
<name>WECG_SHIBS</name>
<dbReference type="EC" id="2.4.1.180" evidence="1"/>
<dbReference type="EMBL" id="CP000036">
    <property type="protein sequence ID" value="ABB68269.1"/>
    <property type="molecule type" value="Genomic_DNA"/>
</dbReference>
<dbReference type="RefSeq" id="WP_001064038.1">
    <property type="nucleotide sequence ID" value="NC_007613.1"/>
</dbReference>
<dbReference type="SMR" id="Q31UI9"/>
<dbReference type="CAZy" id="GT26">
    <property type="family name" value="Glycosyltransferase Family 26"/>
</dbReference>
<dbReference type="GeneID" id="93778149"/>
<dbReference type="KEGG" id="sbo:SBO_3806"/>
<dbReference type="HOGENOM" id="CLU_063203_3_2_6"/>
<dbReference type="UniPathway" id="UPA00566"/>
<dbReference type="Proteomes" id="UP000007067">
    <property type="component" value="Chromosome"/>
</dbReference>
<dbReference type="GO" id="GO:0047241">
    <property type="term" value="F:lipopolysaccharide N-acetylmannosaminouronosyltransferase activity"/>
    <property type="evidence" value="ECO:0007669"/>
    <property type="project" value="UniProtKB-UniRule"/>
</dbReference>
<dbReference type="GO" id="GO:0009246">
    <property type="term" value="P:enterobacterial common antigen biosynthetic process"/>
    <property type="evidence" value="ECO:0007669"/>
    <property type="project" value="UniProtKB-UniRule"/>
</dbReference>
<dbReference type="CDD" id="cd06533">
    <property type="entry name" value="Glyco_transf_WecG_TagA"/>
    <property type="match status" value="1"/>
</dbReference>
<dbReference type="HAMAP" id="MF_01001">
    <property type="entry name" value="WecG_RffM"/>
    <property type="match status" value="1"/>
</dbReference>
<dbReference type="InterPro" id="IPR023085">
    <property type="entry name" value="UDP-ManNAcA_Trfase_WecG"/>
</dbReference>
<dbReference type="InterPro" id="IPR004629">
    <property type="entry name" value="WecG_TagA_CpsF"/>
</dbReference>
<dbReference type="NCBIfam" id="NF002980">
    <property type="entry name" value="PRK03692.1"/>
    <property type="match status" value="1"/>
</dbReference>
<dbReference type="NCBIfam" id="TIGR00696">
    <property type="entry name" value="wecG_tagA_cpsF"/>
    <property type="match status" value="1"/>
</dbReference>
<dbReference type="PANTHER" id="PTHR34136">
    <property type="match status" value="1"/>
</dbReference>
<dbReference type="PANTHER" id="PTHR34136:SF1">
    <property type="entry name" value="UDP-N-ACETYL-D-MANNOSAMINURONIC ACID TRANSFERASE"/>
    <property type="match status" value="1"/>
</dbReference>
<dbReference type="Pfam" id="PF03808">
    <property type="entry name" value="Glyco_tran_WecG"/>
    <property type="match status" value="1"/>
</dbReference>
<comment type="function">
    <text evidence="1">Catalyzes the synthesis of Und-PP-GlcNAc-ManNAcA (Lipid II), the second lipid-linked intermediate involved in enterobacterial common antigen (ECA) synthesis.</text>
</comment>
<comment type="catalytic activity">
    <reaction evidence="1">
        <text>UDP-N-acetyl-alpha-D-mannosaminouronate + N-acetyl-alpha-D-glucosaminyl-di-trans,octa-cis-undecaprenyl diphosphate = beta-D-ManNAcA-(1-&gt;4)-alpha-D-GlcNAc-di-trans,octa-cis-undecaprenyl diphosphate + UDP + H(+)</text>
        <dbReference type="Rhea" id="RHEA:28366"/>
        <dbReference type="ChEBI" id="CHEBI:15378"/>
        <dbReference type="ChEBI" id="CHEBI:58223"/>
        <dbReference type="ChEBI" id="CHEBI:61495"/>
        <dbReference type="ChEBI" id="CHEBI:62959"/>
        <dbReference type="ChEBI" id="CHEBI:70731"/>
        <dbReference type="EC" id="2.4.1.180"/>
    </reaction>
</comment>
<comment type="pathway">
    <text evidence="1">Bacterial outer membrane biogenesis; enterobacterial common antigen biosynthesis.</text>
</comment>
<comment type="similarity">
    <text evidence="1">Belongs to the glycosyltransferase 26 family.</text>
</comment>
<protein>
    <recommendedName>
        <fullName evidence="1">UDP-N-acetyl-D-mannosaminuronic acid transferase</fullName>
        <shortName evidence="1">UDP-ManNAcA transferase</shortName>
        <ecNumber evidence="1">2.4.1.180</ecNumber>
    </recommendedName>
</protein>
<reference key="1">
    <citation type="journal article" date="2005" name="Nucleic Acids Res.">
        <title>Genome dynamics and diversity of Shigella species, the etiologic agents of bacillary dysentery.</title>
        <authorList>
            <person name="Yang F."/>
            <person name="Yang J."/>
            <person name="Zhang X."/>
            <person name="Chen L."/>
            <person name="Jiang Y."/>
            <person name="Yan Y."/>
            <person name="Tang X."/>
            <person name="Wang J."/>
            <person name="Xiong Z."/>
            <person name="Dong J."/>
            <person name="Xue Y."/>
            <person name="Zhu Y."/>
            <person name="Xu X."/>
            <person name="Sun L."/>
            <person name="Chen S."/>
            <person name="Nie H."/>
            <person name="Peng J."/>
            <person name="Xu J."/>
            <person name="Wang Y."/>
            <person name="Yuan Z."/>
            <person name="Wen Y."/>
            <person name="Yao Z."/>
            <person name="Shen Y."/>
            <person name="Qiang B."/>
            <person name="Hou Y."/>
            <person name="Yu J."/>
            <person name="Jin Q."/>
        </authorList>
    </citation>
    <scope>NUCLEOTIDE SEQUENCE [LARGE SCALE GENOMIC DNA]</scope>
    <source>
        <strain>Sb227</strain>
    </source>
</reference>
<proteinExistence type="inferred from homology"/>
<accession>Q31UI9</accession>
<sequence length="246" mass="27962">MNNNTTAPTYTLRGLQLIGWRDMQHALDYLFADGQLKQGTLVAINAEKMLTIEDNAEVRELINAAEFKYADGISVVRSVRKKYPQAQVSRVAGADLWEELMARAGKEGTPVFLVGGKPEVLAQTEAKLRNQWNVNIVGSQDGYFKPEQRQALFERIHASGAQIVTVAMGSPKQEIFMRDCRLVHPDALYMGVGGTYDVFTGHVKRAPKIWQTLGLEWLYRLLSQPSRIKRQLRLLRYLRWHYTGNL</sequence>
<evidence type="ECO:0000255" key="1">
    <source>
        <dbReference type="HAMAP-Rule" id="MF_01001"/>
    </source>
</evidence>
<keyword id="KW-0328">Glycosyltransferase</keyword>
<keyword id="KW-0808">Transferase</keyword>